<feature type="chain" id="PRO_1000021788" description="Proteasome subunit alpha">
    <location>
        <begin position="1"/>
        <end position="259"/>
    </location>
</feature>
<reference key="1">
    <citation type="submission" date="2007-03" db="EMBL/GenBank/DDBJ databases">
        <title>Complete sequence of chromosome of Methanococcus maripaludis C5.</title>
        <authorList>
            <consortium name="US DOE Joint Genome Institute"/>
            <person name="Copeland A."/>
            <person name="Lucas S."/>
            <person name="Lapidus A."/>
            <person name="Barry K."/>
            <person name="Glavina del Rio T."/>
            <person name="Dalin E."/>
            <person name="Tice H."/>
            <person name="Pitluck S."/>
            <person name="Chertkov O."/>
            <person name="Brettin T."/>
            <person name="Bruce D."/>
            <person name="Han C."/>
            <person name="Detter J.C."/>
            <person name="Schmutz J."/>
            <person name="Larimer F."/>
            <person name="Land M."/>
            <person name="Hauser L."/>
            <person name="Kyrpides N."/>
            <person name="Mikhailova N."/>
            <person name="Sieprawska-Lupa M."/>
            <person name="Whitman W.B."/>
            <person name="Richardson P."/>
        </authorList>
    </citation>
    <scope>NUCLEOTIDE SEQUENCE [LARGE SCALE GENOMIC DNA]</scope>
    <source>
        <strain>C5 / ATCC BAA-1333</strain>
    </source>
</reference>
<evidence type="ECO:0000255" key="1">
    <source>
        <dbReference type="HAMAP-Rule" id="MF_00289"/>
    </source>
</evidence>
<accession>A4FZT6</accession>
<dbReference type="EMBL" id="CP000609">
    <property type="protein sequence ID" value="ABO35720.1"/>
    <property type="molecule type" value="Genomic_DNA"/>
</dbReference>
<dbReference type="RefSeq" id="WP_011869170.1">
    <property type="nucleotide sequence ID" value="NC_009135.1"/>
</dbReference>
<dbReference type="SMR" id="A4FZT6"/>
<dbReference type="STRING" id="402880.MmarC5_1422"/>
<dbReference type="GeneID" id="4928401"/>
<dbReference type="KEGG" id="mmq:MmarC5_1422"/>
<dbReference type="eggNOG" id="arCOG00971">
    <property type="taxonomic scope" value="Archaea"/>
</dbReference>
<dbReference type="HOGENOM" id="CLU_035750_4_1_2"/>
<dbReference type="OrthoDB" id="9421at2157"/>
<dbReference type="Proteomes" id="UP000000253">
    <property type="component" value="Chromosome"/>
</dbReference>
<dbReference type="GO" id="GO:0005737">
    <property type="term" value="C:cytoplasm"/>
    <property type="evidence" value="ECO:0007669"/>
    <property type="project" value="UniProtKB-SubCell"/>
</dbReference>
<dbReference type="GO" id="GO:0019773">
    <property type="term" value="C:proteasome core complex, alpha-subunit complex"/>
    <property type="evidence" value="ECO:0000250"/>
    <property type="project" value="UniProtKB"/>
</dbReference>
<dbReference type="GO" id="GO:0004298">
    <property type="term" value="F:threonine-type endopeptidase activity"/>
    <property type="evidence" value="ECO:0007669"/>
    <property type="project" value="InterPro"/>
</dbReference>
<dbReference type="GO" id="GO:0010498">
    <property type="term" value="P:proteasomal protein catabolic process"/>
    <property type="evidence" value="ECO:0007669"/>
    <property type="project" value="UniProtKB-UniRule"/>
</dbReference>
<dbReference type="GO" id="GO:0006511">
    <property type="term" value="P:ubiquitin-dependent protein catabolic process"/>
    <property type="evidence" value="ECO:0007669"/>
    <property type="project" value="InterPro"/>
</dbReference>
<dbReference type="CDD" id="cd03756">
    <property type="entry name" value="proteasome_alpha_archeal"/>
    <property type="match status" value="1"/>
</dbReference>
<dbReference type="FunFam" id="3.60.20.10:FF:000004">
    <property type="entry name" value="Proteasome subunit alpha type-4"/>
    <property type="match status" value="1"/>
</dbReference>
<dbReference type="Gene3D" id="3.60.20.10">
    <property type="entry name" value="Glutamine Phosphoribosylpyrophosphate, subunit 1, domain 1"/>
    <property type="match status" value="1"/>
</dbReference>
<dbReference type="HAMAP" id="MF_00289_A">
    <property type="entry name" value="Proteasome_A_A"/>
    <property type="match status" value="1"/>
</dbReference>
<dbReference type="InterPro" id="IPR029055">
    <property type="entry name" value="Ntn_hydrolases_N"/>
</dbReference>
<dbReference type="InterPro" id="IPR050115">
    <property type="entry name" value="Proteasome_alpha"/>
</dbReference>
<dbReference type="InterPro" id="IPR023332">
    <property type="entry name" value="Proteasome_alpha-type"/>
</dbReference>
<dbReference type="InterPro" id="IPR019982">
    <property type="entry name" value="Proteasome_asu_arc"/>
</dbReference>
<dbReference type="InterPro" id="IPR000426">
    <property type="entry name" value="Proteasome_asu_N"/>
</dbReference>
<dbReference type="InterPro" id="IPR001353">
    <property type="entry name" value="Proteasome_sua/b"/>
</dbReference>
<dbReference type="NCBIfam" id="TIGR03633">
    <property type="entry name" value="arc_protsome_A"/>
    <property type="match status" value="1"/>
</dbReference>
<dbReference type="NCBIfam" id="NF003075">
    <property type="entry name" value="PRK03996.1"/>
    <property type="match status" value="1"/>
</dbReference>
<dbReference type="PANTHER" id="PTHR11599">
    <property type="entry name" value="PROTEASOME SUBUNIT ALPHA/BETA"/>
    <property type="match status" value="1"/>
</dbReference>
<dbReference type="Pfam" id="PF00227">
    <property type="entry name" value="Proteasome"/>
    <property type="match status" value="1"/>
</dbReference>
<dbReference type="Pfam" id="PF10584">
    <property type="entry name" value="Proteasome_A_N"/>
    <property type="match status" value="1"/>
</dbReference>
<dbReference type="SMART" id="SM00948">
    <property type="entry name" value="Proteasome_A_N"/>
    <property type="match status" value="1"/>
</dbReference>
<dbReference type="SUPFAM" id="SSF56235">
    <property type="entry name" value="N-terminal nucleophile aminohydrolases (Ntn hydrolases)"/>
    <property type="match status" value="1"/>
</dbReference>
<dbReference type="PROSITE" id="PS00388">
    <property type="entry name" value="PROTEASOME_ALPHA_1"/>
    <property type="match status" value="1"/>
</dbReference>
<dbReference type="PROSITE" id="PS51475">
    <property type="entry name" value="PROTEASOME_ALPHA_2"/>
    <property type="match status" value="1"/>
</dbReference>
<organism>
    <name type="scientific">Methanococcus maripaludis (strain C5 / ATCC BAA-1333)</name>
    <dbReference type="NCBI Taxonomy" id="402880"/>
    <lineage>
        <taxon>Archaea</taxon>
        <taxon>Methanobacteriati</taxon>
        <taxon>Methanobacteriota</taxon>
        <taxon>Methanomada group</taxon>
        <taxon>Methanococci</taxon>
        <taxon>Methanococcales</taxon>
        <taxon>Methanococcaceae</taxon>
        <taxon>Methanococcus</taxon>
    </lineage>
</organism>
<protein>
    <recommendedName>
        <fullName evidence="1">Proteasome subunit alpha</fullName>
    </recommendedName>
    <alternativeName>
        <fullName evidence="1">20S proteasome alpha subunit</fullName>
    </alternativeName>
    <alternativeName>
        <fullName evidence="1">Proteasome core protein PsmA</fullName>
    </alternativeName>
</protein>
<keyword id="KW-0963">Cytoplasm</keyword>
<keyword id="KW-0647">Proteasome</keyword>
<proteinExistence type="inferred from homology"/>
<comment type="function">
    <text evidence="1">Component of the proteasome core, a large protease complex with broad specificity involved in protein degradation.</text>
</comment>
<comment type="activity regulation">
    <text evidence="1">The formation of the proteasomal ATPase PAN-20S proteasome complex, via the docking of the C-termini of PAN into the intersubunit pockets in the alpha-rings, triggers opening of the gate for substrate entry. Interconversion between the open-gate and close-gate conformations leads to a dynamic regulation of the 20S proteasome proteolysis activity.</text>
</comment>
<comment type="subunit">
    <text evidence="1">The 20S proteasome core is composed of 14 alpha and 14 beta subunits that assemble into four stacked heptameric rings, resulting in a barrel-shaped structure. The two inner rings, each composed of seven catalytic beta subunits, are sandwiched by two outer rings, each composed of seven alpha subunits. The catalytic chamber with the active sites is on the inside of the barrel. Has a gated structure, the ends of the cylinder being occluded by the N-termini of the alpha-subunits. Is capped at one or both ends by the proteasome regulatory ATPase, PAN.</text>
</comment>
<comment type="subcellular location">
    <subcellularLocation>
        <location evidence="1">Cytoplasm</location>
    </subcellularLocation>
</comment>
<comment type="similarity">
    <text evidence="1">Belongs to the peptidase T1A family.</text>
</comment>
<sequence length="259" mass="28482">MQQMVPASGYDRAITIFSPEGRLYQVEYAREAVRRGTTAVGIKCKDGVVLAVDRRITSKLIDVSSIEKIFQIDDHIVAATSGLVADARVLIDRARLEAQMNRISYGEAITVEALAKKICDIKQAYTQHGGARPFGLALLITGIDRHSARLFETDPSGALIEYKATAIGSGRPIAMEVLESKYSEDMTVNEGMELALYALSKTTEELKPENIDMAIVKDSGKLVEKISVDEIEKIVKAVYKKVEAEEAEAEKNKGEEDIE</sequence>
<gene>
    <name evidence="1" type="primary">psmA</name>
    <name type="ordered locus">MmarC5_1422</name>
</gene>
<name>PSA_METM5</name>